<organism>
    <name type="scientific">Glycine max</name>
    <name type="common">Soybean</name>
    <name type="synonym">Glycine hispida</name>
    <dbReference type="NCBI Taxonomy" id="3847"/>
    <lineage>
        <taxon>Eukaryota</taxon>
        <taxon>Viridiplantae</taxon>
        <taxon>Streptophyta</taxon>
        <taxon>Embryophyta</taxon>
        <taxon>Tracheophyta</taxon>
        <taxon>Spermatophyta</taxon>
        <taxon>Magnoliopsida</taxon>
        <taxon>eudicotyledons</taxon>
        <taxon>Gunneridae</taxon>
        <taxon>Pentapetalae</taxon>
        <taxon>rosids</taxon>
        <taxon>fabids</taxon>
        <taxon>Fabales</taxon>
        <taxon>Fabaceae</taxon>
        <taxon>Papilionoideae</taxon>
        <taxon>50 kb inversion clade</taxon>
        <taxon>NPAAA clade</taxon>
        <taxon>indigoferoid/millettioid clade</taxon>
        <taxon>Phaseoleae</taxon>
        <taxon>Glycine</taxon>
        <taxon>Glycine subgen. Soja</taxon>
    </lineage>
</organism>
<proteinExistence type="evidence at protein level"/>
<protein>
    <recommendedName>
        <fullName>Protein P21</fullName>
    </recommendedName>
</protein>
<comment type="similarity">
    <text evidence="1">Belongs to the thaumatin family.</text>
</comment>
<feature type="chain" id="PRO_0000096236" description="Protein P21">
    <location>
        <begin position="1"/>
        <end position="202"/>
    </location>
</feature>
<feature type="disulfide bond" evidence="1">
    <location>
        <begin position="9"/>
        <end position="201"/>
    </location>
</feature>
<feature type="disulfide bond" evidence="1">
    <location>
        <begin position="51"/>
        <end position="61"/>
    </location>
</feature>
<feature type="disulfide bond" evidence="1">
    <location>
        <begin position="66"/>
        <end position="72"/>
    </location>
</feature>
<feature type="disulfide bond" evidence="1">
    <location>
        <begin position="117"/>
        <end position="190"/>
    </location>
</feature>
<feature type="disulfide bond" evidence="1">
    <location>
        <begin position="123"/>
        <end position="173"/>
    </location>
</feature>
<feature type="disulfide bond" evidence="1">
    <location>
        <begin position="131"/>
        <end position="141"/>
    </location>
</feature>
<feature type="disulfide bond" evidence="1">
    <location>
        <begin position="145"/>
        <end position="154"/>
    </location>
</feature>
<feature type="disulfide bond" evidence="1">
    <location>
        <begin position="155"/>
        <end position="160"/>
    </location>
</feature>
<feature type="sequence variant">
    <original>P</original>
    <variation>T</variation>
    <location>
        <position position="185"/>
    </location>
</feature>
<sequence>ARFEITNRCTYTVWAASVPVGGGVQLNPGQSWSVDVPAGTKGARVWARTGCNFDGSGRGGCQTGDCGGVLDCKAYGAPPNTLAEYGLNGFNNLDFFDISLVDGFNVPMDFSPTSNGCTRGISCTADINGQCPSELKTQGGCNNPCTVFKTDQYCCNSGSCGPTDYSRFFKQRCPDAYSYPKDDPPSTFTCNGGTDYRVVFCP</sequence>
<accession>P25096</accession>
<keyword id="KW-0903">Direct protein sequencing</keyword>
<keyword id="KW-1015">Disulfide bond</keyword>
<keyword id="KW-1185">Reference proteome</keyword>
<dbReference type="PIR" id="A33176">
    <property type="entry name" value="A33176"/>
</dbReference>
<dbReference type="SMR" id="P25096"/>
<dbReference type="STRING" id="3847.P25096"/>
<dbReference type="PaxDb" id="3847-GLYMA05G38130.1"/>
<dbReference type="eggNOG" id="ENOG502QV4N">
    <property type="taxonomic scope" value="Eukaryota"/>
</dbReference>
<dbReference type="InParanoid" id="P25096"/>
<dbReference type="Proteomes" id="UP000008827">
    <property type="component" value="Unplaced"/>
</dbReference>
<dbReference type="GO" id="GO:0006952">
    <property type="term" value="P:defense response"/>
    <property type="evidence" value="ECO:0000318"/>
    <property type="project" value="GO_Central"/>
</dbReference>
<dbReference type="FunFam" id="2.60.110.10:FF:000003">
    <property type="entry name" value="Thaumatin I"/>
    <property type="match status" value="1"/>
</dbReference>
<dbReference type="Gene3D" id="2.60.110.10">
    <property type="entry name" value="Thaumatin"/>
    <property type="match status" value="1"/>
</dbReference>
<dbReference type="InterPro" id="IPR037176">
    <property type="entry name" value="Osmotin/thaumatin-like_sf"/>
</dbReference>
<dbReference type="InterPro" id="IPR001938">
    <property type="entry name" value="Thaumatin"/>
</dbReference>
<dbReference type="InterPro" id="IPR017949">
    <property type="entry name" value="Thaumatin_CS"/>
</dbReference>
<dbReference type="PANTHER" id="PTHR31048">
    <property type="entry name" value="OS03G0233200 PROTEIN"/>
    <property type="match status" value="1"/>
</dbReference>
<dbReference type="Pfam" id="PF00314">
    <property type="entry name" value="Thaumatin"/>
    <property type="match status" value="1"/>
</dbReference>
<dbReference type="PIRSF" id="PIRSF002703">
    <property type="entry name" value="Thaumatin"/>
    <property type="match status" value="1"/>
</dbReference>
<dbReference type="PRINTS" id="PR00347">
    <property type="entry name" value="THAUMATIN"/>
</dbReference>
<dbReference type="SMART" id="SM00205">
    <property type="entry name" value="THN"/>
    <property type="match status" value="1"/>
</dbReference>
<dbReference type="SUPFAM" id="SSF49870">
    <property type="entry name" value="Osmotin, thaumatin-like protein"/>
    <property type="match status" value="1"/>
</dbReference>
<dbReference type="PROSITE" id="PS00316">
    <property type="entry name" value="THAUMATIN_1"/>
    <property type="match status" value="1"/>
</dbReference>
<dbReference type="PROSITE" id="PS51367">
    <property type="entry name" value="THAUMATIN_2"/>
    <property type="match status" value="1"/>
</dbReference>
<reference key="1">
    <citation type="journal article" date="1992" name="Plant Physiol.">
        <title>Complete amino acid sequence of soybean leaf P21: similarity to the thaumatin-like polypeptides.</title>
        <authorList>
            <person name="Graham J.S."/>
            <person name="Burkhart W."/>
            <person name="Xiong J."/>
            <person name="Gillikin J."/>
        </authorList>
    </citation>
    <scope>PROTEIN SEQUENCE</scope>
    <source>
        <strain>cv. Williams 82</strain>
        <tissue>Leaf</tissue>
    </source>
</reference>
<evidence type="ECO:0000255" key="1">
    <source>
        <dbReference type="PROSITE-ProRule" id="PRU00699"/>
    </source>
</evidence>
<name>P21_SOYBN</name>